<gene>
    <name type="primary">yhfZ</name>
    <name type="ordered locus">b3383</name>
    <name type="ordered locus">JW5948</name>
</gene>
<comment type="sequence caution" evidence="1">
    <conflict type="frameshift">
        <sequence resource="EMBL-CDS" id="AAA58180"/>
    </conflict>
</comment>
<accession>P45552</accession>
<accession>Q2M748</accession>
<accession>Q6BF36</accession>
<protein>
    <recommendedName>
        <fullName>Uncharacterized protein YhfZ</fullName>
    </recommendedName>
</protein>
<keyword id="KW-1185">Reference proteome</keyword>
<name>YHFZ_ECOLI</name>
<reference key="1">
    <citation type="journal article" date="1997" name="Science">
        <title>The complete genome sequence of Escherichia coli K-12.</title>
        <authorList>
            <person name="Blattner F.R."/>
            <person name="Plunkett G. III"/>
            <person name="Bloch C.A."/>
            <person name="Perna N.T."/>
            <person name="Burland V."/>
            <person name="Riley M."/>
            <person name="Collado-Vides J."/>
            <person name="Glasner J.D."/>
            <person name="Rode C.K."/>
            <person name="Mayhew G.F."/>
            <person name="Gregor J."/>
            <person name="Davis N.W."/>
            <person name="Kirkpatrick H.A."/>
            <person name="Goeden M.A."/>
            <person name="Rose D.J."/>
            <person name="Mau B."/>
            <person name="Shao Y."/>
        </authorList>
    </citation>
    <scope>NUCLEOTIDE SEQUENCE [LARGE SCALE GENOMIC DNA]</scope>
    <source>
        <strain>K12 / MG1655 / ATCC 47076</strain>
    </source>
</reference>
<reference key="2">
    <citation type="journal article" date="2006" name="Nucleic Acids Res.">
        <title>Escherichia coli K-12: a cooperatively developed annotation snapshot -- 2005.</title>
        <authorList>
            <person name="Riley M."/>
            <person name="Abe T."/>
            <person name="Arnaud M.B."/>
            <person name="Berlyn M.K.B."/>
            <person name="Blattner F.R."/>
            <person name="Chaudhuri R.R."/>
            <person name="Glasner J.D."/>
            <person name="Horiuchi T."/>
            <person name="Keseler I.M."/>
            <person name="Kosuge T."/>
            <person name="Mori H."/>
            <person name="Perna N.T."/>
            <person name="Plunkett G. III"/>
            <person name="Rudd K.E."/>
            <person name="Serres M.H."/>
            <person name="Thomas G.H."/>
            <person name="Thomson N.R."/>
            <person name="Wishart D."/>
            <person name="Wanner B.L."/>
        </authorList>
    </citation>
    <scope>SEQUENCE REVISION</scope>
</reference>
<reference key="3">
    <citation type="journal article" date="2006" name="Mol. Syst. Biol.">
        <title>Highly accurate genome sequences of Escherichia coli K-12 strains MG1655 and W3110.</title>
        <authorList>
            <person name="Hayashi K."/>
            <person name="Morooka N."/>
            <person name="Yamamoto Y."/>
            <person name="Fujita K."/>
            <person name="Isono K."/>
            <person name="Choi S."/>
            <person name="Ohtsubo E."/>
            <person name="Baba T."/>
            <person name="Wanner B.L."/>
            <person name="Mori H."/>
            <person name="Horiuchi T."/>
        </authorList>
    </citation>
    <scope>NUCLEOTIDE SEQUENCE [LARGE SCALE GENOMIC DNA]</scope>
    <source>
        <strain>K12 / W3110 / ATCC 27325 / DSM 5911</strain>
    </source>
</reference>
<evidence type="ECO:0000305" key="1"/>
<organism>
    <name type="scientific">Escherichia coli (strain K12)</name>
    <dbReference type="NCBI Taxonomy" id="83333"/>
    <lineage>
        <taxon>Bacteria</taxon>
        <taxon>Pseudomonadati</taxon>
        <taxon>Pseudomonadota</taxon>
        <taxon>Gammaproteobacteria</taxon>
        <taxon>Enterobacterales</taxon>
        <taxon>Enterobacteriaceae</taxon>
        <taxon>Escherichia</taxon>
    </lineage>
</organism>
<feature type="chain" id="PRO_0000169536" description="Uncharacterized protein YhfZ">
    <location>
        <begin position="1"/>
        <end position="301"/>
    </location>
</feature>
<sequence length="301" mass="33504">MRRTFIKKEGVVITTLARYLLGEKCGNRLKTIDELANECRSSVGLTQAALKTLESSGAIRIERRGRNGSYLVEMDNKALLTHVDINNVVCAMPLPYTRLYEGLASGLKAQFDGIPFYYAHMRGADIRVECLLNGVYDMAVVSRLAAESYLTQKGLCLALELGPHTYVGEHQLICRKGESANVKRVGLDNRSADQKIMTDVFFGGSDVERVDLSYHESLQRIVKGDVDAVIWNVVAENELTMLGLEATPLTDDPRFLQATEAVVLTRVDDYPMQQLLRAVVDKHALLAHQQRVVSGEQEPSY</sequence>
<proteinExistence type="predicted"/>
<dbReference type="EMBL" id="U18997">
    <property type="protein sequence ID" value="AAA58180.1"/>
    <property type="status" value="ALT_FRAME"/>
    <property type="molecule type" value="Genomic_DNA"/>
</dbReference>
<dbReference type="EMBL" id="U00096">
    <property type="protein sequence ID" value="AAT48178.1"/>
    <property type="molecule type" value="Genomic_DNA"/>
</dbReference>
<dbReference type="EMBL" id="AP009048">
    <property type="protein sequence ID" value="BAE77908.1"/>
    <property type="molecule type" value="Genomic_DNA"/>
</dbReference>
<dbReference type="RefSeq" id="WP_001254790.1">
    <property type="nucleotide sequence ID" value="NZ_SSZK01000008.1"/>
</dbReference>
<dbReference type="RefSeq" id="YP_026214.1">
    <property type="nucleotide sequence ID" value="NC_000913.3"/>
</dbReference>
<dbReference type="SMR" id="P45552"/>
<dbReference type="BioGRID" id="4259292">
    <property type="interactions" value="249"/>
</dbReference>
<dbReference type="FunCoup" id="P45552">
    <property type="interactions" value="10"/>
</dbReference>
<dbReference type="STRING" id="511145.b3383"/>
<dbReference type="PaxDb" id="511145-b3383"/>
<dbReference type="EnsemblBacteria" id="AAT48178">
    <property type="protein sequence ID" value="AAT48178"/>
    <property type="gene ID" value="b3383"/>
</dbReference>
<dbReference type="GeneID" id="947897"/>
<dbReference type="KEGG" id="ecj:JW5948"/>
<dbReference type="KEGG" id="eco:b3383"/>
<dbReference type="KEGG" id="ecoc:C3026_18360"/>
<dbReference type="PATRIC" id="fig|511145.12.peg.3476"/>
<dbReference type="EchoBASE" id="EB2757"/>
<dbReference type="eggNOG" id="COG2188">
    <property type="taxonomic scope" value="Bacteria"/>
</dbReference>
<dbReference type="HOGENOM" id="CLU_073294_1_0_6"/>
<dbReference type="InParanoid" id="P45552"/>
<dbReference type="OMA" id="IDATVWN"/>
<dbReference type="OrthoDB" id="147067at2"/>
<dbReference type="BioCyc" id="EcoCyc:G7735-MONOMER"/>
<dbReference type="PRO" id="PR:P45552"/>
<dbReference type="Proteomes" id="UP000000625">
    <property type="component" value="Chromosome"/>
</dbReference>
<dbReference type="CDD" id="cd13533">
    <property type="entry name" value="PBP2_Yhfz"/>
    <property type="match status" value="1"/>
</dbReference>
<dbReference type="Gene3D" id="3.40.190.10">
    <property type="entry name" value="Periplasmic binding protein-like II"/>
    <property type="match status" value="2"/>
</dbReference>
<dbReference type="InterPro" id="IPR041444">
    <property type="entry name" value="HTH_41"/>
</dbReference>
<dbReference type="InterPro" id="IPR032791">
    <property type="entry name" value="YhfZ_C"/>
</dbReference>
<dbReference type="NCBIfam" id="NF041241">
    <property type="entry name" value="YhfZ_full"/>
    <property type="match status" value="1"/>
</dbReference>
<dbReference type="Pfam" id="PF14502">
    <property type="entry name" value="HTH_41"/>
    <property type="match status" value="1"/>
</dbReference>
<dbReference type="Pfam" id="PF14503">
    <property type="entry name" value="YhfZ_C"/>
    <property type="match status" value="1"/>
</dbReference>
<dbReference type="SUPFAM" id="SSF53850">
    <property type="entry name" value="Periplasmic binding protein-like II"/>
    <property type="match status" value="1"/>
</dbReference>